<reference key="1">
    <citation type="journal article" date="2004" name="Proc. Natl. Acad. Sci. U.S.A.">
        <title>The diploid genome sequence of Candida albicans.</title>
        <authorList>
            <person name="Jones T."/>
            <person name="Federspiel N.A."/>
            <person name="Chibana H."/>
            <person name="Dungan J."/>
            <person name="Kalman S."/>
            <person name="Magee B.B."/>
            <person name="Newport G."/>
            <person name="Thorstenson Y.R."/>
            <person name="Agabian N."/>
            <person name="Magee P.T."/>
            <person name="Davis R.W."/>
            <person name="Scherer S."/>
        </authorList>
    </citation>
    <scope>NUCLEOTIDE SEQUENCE [LARGE SCALE GENOMIC DNA]</scope>
    <source>
        <strain>SC5314 / ATCC MYA-2876</strain>
    </source>
</reference>
<reference key="2">
    <citation type="journal article" date="2007" name="Genome Biol.">
        <title>Assembly of the Candida albicans genome into sixteen supercontigs aligned on the eight chromosomes.</title>
        <authorList>
            <person name="van het Hoog M."/>
            <person name="Rast T.J."/>
            <person name="Martchenko M."/>
            <person name="Grindle S."/>
            <person name="Dignard D."/>
            <person name="Hogues H."/>
            <person name="Cuomo C."/>
            <person name="Berriman M."/>
            <person name="Scherer S."/>
            <person name="Magee B.B."/>
            <person name="Whiteway M."/>
            <person name="Chibana H."/>
            <person name="Nantel A."/>
            <person name="Magee P.T."/>
        </authorList>
    </citation>
    <scope>GENOME REANNOTATION</scope>
    <source>
        <strain>SC5314 / ATCC MYA-2876</strain>
    </source>
</reference>
<reference key="3">
    <citation type="journal article" date="2013" name="Genome Biol.">
        <title>Assembly of a phased diploid Candida albicans genome facilitates allele-specific measurements and provides a simple model for repeat and indel structure.</title>
        <authorList>
            <person name="Muzzey D."/>
            <person name="Schwartz K."/>
            <person name="Weissman J.S."/>
            <person name="Sherlock G."/>
        </authorList>
    </citation>
    <scope>NUCLEOTIDE SEQUENCE [LARGE SCALE GENOMIC DNA]</scope>
    <scope>GENOME REANNOTATION</scope>
    <source>
        <strain>SC5314 / ATCC MYA-2876</strain>
    </source>
</reference>
<reference key="4">
    <citation type="journal article" date="2005" name="Eukaryot. Cell">
        <title>Genome-wide transcription profiling of the early phase of biofilm formation by Candida albicans.</title>
        <authorList>
            <person name="Murillo L.A."/>
            <person name="Newport G."/>
            <person name="Lan C.Y."/>
            <person name="Habelitz S."/>
            <person name="Dungan J."/>
            <person name="Agabian N.M."/>
        </authorList>
    </citation>
    <scope>INDUCTION</scope>
</reference>
<reference key="5">
    <citation type="journal article" date="2007" name="PLoS Pathog.">
        <title>Genome-wide fitness test and mechanism-of-action studies of inhibitory compounds in Candida albicans.</title>
        <authorList>
            <person name="Xu D."/>
            <person name="Jiang B."/>
            <person name="Ketela T."/>
            <person name="Lemieux S."/>
            <person name="Veillette K."/>
            <person name="Martel N."/>
            <person name="Davison J."/>
            <person name="Sillaots S."/>
            <person name="Trosok S."/>
            <person name="Bachewich C."/>
            <person name="Bussey H."/>
            <person name="Youngman P."/>
            <person name="Roemer T."/>
        </authorList>
    </citation>
    <scope>DISRUPTION PHENOTYPE</scope>
</reference>
<reference key="6">
    <citation type="journal article" date="2013" name="J. Biol. Chem.">
        <title>Glycerophosphocholine utilization by Candida albicans: role of the Git3 transporter in virulence.</title>
        <authorList>
            <person name="Bishop A.C."/>
            <person name="Ganguly S."/>
            <person name="Solis N.V."/>
            <person name="Cooley B.M."/>
            <person name="Jensen-Seaman M.I."/>
            <person name="Filler S.G."/>
            <person name="Mitchell A.P."/>
            <person name="Patton-Vogt J."/>
        </authorList>
    </citation>
    <scope>FUNCTION</scope>
    <scope>CATALYTIC ACTIVITY</scope>
    <scope>DISRUPTION PHENOTYPE</scope>
    <scope>INDUCTION</scope>
</reference>
<gene>
    <name evidence="7" type="primary">GDE1</name>
    <name type="ordered locus">CAALFM_C504510WA</name>
</gene>
<feature type="chain" id="PRO_0000439802" description="Glycerophosphocholine phosphodiesterase GDE1">
    <location>
        <begin position="1"/>
        <end position="1162"/>
    </location>
</feature>
<feature type="domain" description="SPX" evidence="2">
    <location>
        <begin position="1"/>
        <end position="155"/>
    </location>
</feature>
<feature type="repeat" description="ANK 1" evidence="1">
    <location>
        <begin position="346"/>
        <end position="375"/>
    </location>
</feature>
<feature type="repeat" description="ANK 2" evidence="1">
    <location>
        <begin position="392"/>
        <end position="421"/>
    </location>
</feature>
<feature type="repeat" description="ANK 3" evidence="1">
    <location>
        <begin position="423"/>
        <end position="452"/>
    </location>
</feature>
<feature type="repeat" description="ANK 4" evidence="1">
    <location>
        <begin position="458"/>
        <end position="487"/>
    </location>
</feature>
<feature type="repeat" description="ANK 5" evidence="1">
    <location>
        <begin position="492"/>
        <end position="521"/>
    </location>
</feature>
<feature type="repeat" description="ANK 6" evidence="1">
    <location>
        <begin position="525"/>
        <end position="554"/>
    </location>
</feature>
<feature type="domain" description="GP-PDE" evidence="3">
    <location>
        <begin position="817"/>
        <end position="1146"/>
    </location>
</feature>
<keyword id="KW-0040">ANK repeat</keyword>
<keyword id="KW-0963">Cytoplasm</keyword>
<keyword id="KW-0378">Hydrolase</keyword>
<keyword id="KW-1185">Reference proteome</keyword>
<keyword id="KW-0677">Repeat</keyword>
<accession>A0A1D8PNZ7</accession>
<protein>
    <recommendedName>
        <fullName evidence="7">Glycerophosphocholine phosphodiesterase GDE1</fullName>
        <ecNumber evidence="9">3.1.4.2</ecNumber>
    </recommendedName>
    <alternativeName>
        <fullName>Glycerophosphodiester phosphodiesterase GDE1</fullName>
    </alternativeName>
</protein>
<name>GDE1_CANAL</name>
<evidence type="ECO:0000255" key="1"/>
<evidence type="ECO:0000255" key="2">
    <source>
        <dbReference type="PROSITE-ProRule" id="PRU00714"/>
    </source>
</evidence>
<evidence type="ECO:0000255" key="3">
    <source>
        <dbReference type="PROSITE-ProRule" id="PRU01041"/>
    </source>
</evidence>
<evidence type="ECO:0000269" key="4">
    <source>
    </source>
</evidence>
<evidence type="ECO:0000269" key="5">
    <source>
    </source>
</evidence>
<evidence type="ECO:0000269" key="6">
    <source>
    </source>
</evidence>
<evidence type="ECO:0000303" key="7">
    <source>
    </source>
</evidence>
<evidence type="ECO:0000305" key="8"/>
<evidence type="ECO:0000305" key="9">
    <source>
    </source>
</evidence>
<dbReference type="EC" id="3.1.4.2" evidence="9"/>
<dbReference type="EMBL" id="CP017627">
    <property type="protein sequence ID" value="AOW29857.1"/>
    <property type="molecule type" value="Genomic_DNA"/>
</dbReference>
<dbReference type="RefSeq" id="XP_721845.1">
    <property type="nucleotide sequence ID" value="XM_716752.2"/>
</dbReference>
<dbReference type="SMR" id="A0A1D8PNZ7"/>
<dbReference type="FunCoup" id="A0A1D8PNZ7">
    <property type="interactions" value="184"/>
</dbReference>
<dbReference type="STRING" id="237561.A0A1D8PNZ7"/>
<dbReference type="EnsemblFungi" id="C5_04510W_A-T">
    <property type="protein sequence ID" value="C5_04510W_A-T-p1"/>
    <property type="gene ID" value="C5_04510W_A"/>
</dbReference>
<dbReference type="GeneID" id="3636505"/>
<dbReference type="KEGG" id="cal:CAALFM_C504510WA"/>
<dbReference type="CGD" id="CAL0000191313">
    <property type="gene designation" value="GDE1"/>
</dbReference>
<dbReference type="VEuPathDB" id="FungiDB:C5_04510W_A"/>
<dbReference type="eggNOG" id="KOG0504">
    <property type="taxonomic scope" value="Eukaryota"/>
</dbReference>
<dbReference type="eggNOG" id="KOG1162">
    <property type="taxonomic scope" value="Eukaryota"/>
</dbReference>
<dbReference type="eggNOG" id="KOG2421">
    <property type="taxonomic scope" value="Eukaryota"/>
</dbReference>
<dbReference type="InParanoid" id="A0A1D8PNZ7"/>
<dbReference type="OMA" id="WTPMEHA"/>
<dbReference type="OrthoDB" id="197419at2759"/>
<dbReference type="Proteomes" id="UP000000559">
    <property type="component" value="Chromosome 5"/>
</dbReference>
<dbReference type="GO" id="GO:0005737">
    <property type="term" value="C:cytoplasm"/>
    <property type="evidence" value="ECO:0007669"/>
    <property type="project" value="UniProtKB-SubCell"/>
</dbReference>
<dbReference type="GO" id="GO:0047389">
    <property type="term" value="F:glycerophosphocholine phosphodiesterase activity"/>
    <property type="evidence" value="ECO:0000315"/>
    <property type="project" value="CGD"/>
</dbReference>
<dbReference type="GO" id="GO:0046475">
    <property type="term" value="P:glycerophospholipid catabolic process"/>
    <property type="evidence" value="ECO:0000315"/>
    <property type="project" value="CGD"/>
</dbReference>
<dbReference type="CDD" id="cd14484">
    <property type="entry name" value="SPX_GDE1_like"/>
    <property type="match status" value="1"/>
</dbReference>
<dbReference type="FunFam" id="1.25.40.20:FF:000845">
    <property type="entry name" value="Glycerophosphocholine phosphodiesterase GDE1"/>
    <property type="match status" value="1"/>
</dbReference>
<dbReference type="Gene3D" id="1.25.40.20">
    <property type="entry name" value="Ankyrin repeat-containing domain"/>
    <property type="match status" value="2"/>
</dbReference>
<dbReference type="Gene3D" id="3.20.20.190">
    <property type="entry name" value="Phosphatidylinositol (PI) phosphodiesterase"/>
    <property type="match status" value="1"/>
</dbReference>
<dbReference type="InterPro" id="IPR002110">
    <property type="entry name" value="Ankyrin_rpt"/>
</dbReference>
<dbReference type="InterPro" id="IPR036770">
    <property type="entry name" value="Ankyrin_rpt-contain_sf"/>
</dbReference>
<dbReference type="InterPro" id="IPR051578">
    <property type="entry name" value="GDPD"/>
</dbReference>
<dbReference type="InterPro" id="IPR030395">
    <property type="entry name" value="GP_PDE_dom"/>
</dbReference>
<dbReference type="InterPro" id="IPR017946">
    <property type="entry name" value="PLC-like_Pdiesterase_TIM-brl"/>
</dbReference>
<dbReference type="InterPro" id="IPR004331">
    <property type="entry name" value="SPX_dom"/>
</dbReference>
<dbReference type="PANTHER" id="PTHR22958:SF1">
    <property type="entry name" value="GLYCEROPHOSPHOCHOLINE PHOSPHODIESTERASE GPCPD1"/>
    <property type="match status" value="1"/>
</dbReference>
<dbReference type="PANTHER" id="PTHR22958">
    <property type="entry name" value="GLYCEROPHOSPHORYL DIESTER PHOSPHODIESTERASE"/>
    <property type="match status" value="1"/>
</dbReference>
<dbReference type="Pfam" id="PF12796">
    <property type="entry name" value="Ank_2"/>
    <property type="match status" value="2"/>
</dbReference>
<dbReference type="Pfam" id="PF25329">
    <property type="entry name" value="C2_GDE1"/>
    <property type="match status" value="1"/>
</dbReference>
<dbReference type="Pfam" id="PF03009">
    <property type="entry name" value="GDPD"/>
    <property type="match status" value="1"/>
</dbReference>
<dbReference type="Pfam" id="PF03105">
    <property type="entry name" value="SPX"/>
    <property type="match status" value="1"/>
</dbReference>
<dbReference type="SMART" id="SM00248">
    <property type="entry name" value="ANK"/>
    <property type="match status" value="6"/>
</dbReference>
<dbReference type="SUPFAM" id="SSF48403">
    <property type="entry name" value="Ankyrin repeat"/>
    <property type="match status" value="1"/>
</dbReference>
<dbReference type="SUPFAM" id="SSF51695">
    <property type="entry name" value="PLC-like phosphodiesterases"/>
    <property type="match status" value="1"/>
</dbReference>
<dbReference type="PROSITE" id="PS50297">
    <property type="entry name" value="ANK_REP_REGION"/>
    <property type="match status" value="1"/>
</dbReference>
<dbReference type="PROSITE" id="PS50088">
    <property type="entry name" value="ANK_REPEAT"/>
    <property type="match status" value="3"/>
</dbReference>
<dbReference type="PROSITE" id="PS51704">
    <property type="entry name" value="GP_PDE"/>
    <property type="match status" value="1"/>
</dbReference>
<dbReference type="PROSITE" id="PS51382">
    <property type="entry name" value="SPX"/>
    <property type="match status" value="1"/>
</dbReference>
<proteinExistence type="evidence at protein level"/>
<comment type="function">
    <text evidence="6">Glycerophosphocholine glycerophosphodiesterase responsible for the hydrolysis of intracellular glycerophosphocholine into glycerol-phosphate and choline (PubMed:24114876). The choline is used for phosphatidyl-choline synthesis (PubMed:24114876). Required for utilization of glycerophosphocholine as phosphate source (PubMed:24114876). C.albicans can utilize GroPCho through transport and intracellular hydrolysis or through extracellular hydrolysis (PubMed:24114876).</text>
</comment>
<comment type="catalytic activity">
    <reaction evidence="9">
        <text>sn-glycerol 3-phosphocholine + H2O = sn-glycerol 3-phosphate + choline + H(+)</text>
        <dbReference type="Rhea" id="RHEA:16061"/>
        <dbReference type="ChEBI" id="CHEBI:15354"/>
        <dbReference type="ChEBI" id="CHEBI:15377"/>
        <dbReference type="ChEBI" id="CHEBI:15378"/>
        <dbReference type="ChEBI" id="CHEBI:16870"/>
        <dbReference type="ChEBI" id="CHEBI:57597"/>
        <dbReference type="EC" id="3.1.4.2"/>
    </reaction>
    <physiologicalReaction direction="left-to-right" evidence="9">
        <dbReference type="Rhea" id="RHEA:16062"/>
    </physiologicalReaction>
</comment>
<comment type="subcellular location">
    <subcellularLocation>
        <location evidence="9">Cytoplasm</location>
    </subcellularLocation>
</comment>
<comment type="induction">
    <text evidence="4 6">Expression is positively regulated by the transcription factor PHO4 (PubMed:24114876). Induced during early phase of biofilm formation (PubMed:16151249).</text>
</comment>
<comment type="disruption phenotype">
    <text evidence="5 6">Results in altered glycerophosphocholine catabolism (PubMed:24114876). Leads to hypersensitivity to 5-fluorouracil (5-FU) (PubMed:17604452).</text>
</comment>
<comment type="similarity">
    <text evidence="8">Belongs to the GDE1 family.</text>
</comment>
<organism>
    <name type="scientific">Candida albicans (strain SC5314 / ATCC MYA-2876)</name>
    <name type="common">Yeast</name>
    <dbReference type="NCBI Taxonomy" id="237561"/>
    <lineage>
        <taxon>Eukaryota</taxon>
        <taxon>Fungi</taxon>
        <taxon>Dikarya</taxon>
        <taxon>Ascomycota</taxon>
        <taxon>Saccharomycotina</taxon>
        <taxon>Pichiomycetes</taxon>
        <taxon>Debaryomycetaceae</taxon>
        <taxon>Candida/Lodderomyces clade</taxon>
        <taxon>Candida</taxon>
    </lineage>
</organism>
<sequence>MKFGKTYVTHQIPEWSIYYMNYKQLKKIIKSIDSAANTNVDESKYPEVISDTLGSFFYDLDRDIEKVDSFYNTKFKEYNRRLNKIFQVLGYQDGQITHNIESSEELDEIINILIELKSLFRNLKWFAELNHKGFIKILKKLDKKLTSILSQHSGVSVGGVSNHNQEAYMGSRINALPFANGTEASNCLDSIHHILSRIETRNDVVQETIPVENNETSISALIKNDDFEGLKKHITIKSSQKFLISTLNKAALANSTKCIDVIWNQLDMLYDDSDFNGRNFFHQHIISLGKAQFIREEQIVPGEVTNRLIGGDNGPDNSNKNDNPIGLLYILNKLKHKRLILAEDHYHRTPLHYASQYGLVEVTRYLVEFGVKWGLINTSISIDDVSIWGDQEGLTPLHLSIIGKHPKTTETLLGFNKAQTLTCPNLLLLAVRLNSPQILNSLIVEGNIDVNYTDIDHRNETALYIASKLNHPDLVEFLLESNANTEIGENVFGWTPIFIAASEGFMTIVKLLKEYGASYDIVDDSGWLPMEHACLRGHLDVTDLLLPKNEKLLLYDMYHPENNLPRIPSLAASPVLTGSDDGTVSTSSIDKLPEPQKNTVNQFYKQLKNNSSNNVSRSTSPKRNKRYKPVKSFGHRYLNEDESLILLTLGTTDLRDTNVPVELNKVSLAKSFATELDTALSLSITCRHKLTNNPVEPPVVVDLPLEDFHGSATDPISFKLSNDLTVNDVIITFDIIPTYQVNKKVIGRAIALLKDAYTKVGPNLRSLNNSIAIPIIESTNLDILGTIRFEYLQVLPFKHKAMSIARSDTYWKQLVSTRVIGHRGLGKNLSGKKSLQLGENTVESFIAAASLGASYVEFDVQLTKDHVPVVYHDFTVAESGVDIPMHLLTLEQFMGFNTPTEKPTHTVDDEVLTRGKQRAQSSYQLSNNHNDDIEKEFANQRDERMKFTKTWKNQGYKGNLRGSSVASNFVTLRELFRKLPNNVGFNIEVKYPMLDEAQLEDMGEIGVDLNFFVDTILKVIYDENTTGRDIVFSSFHPDICLLLSLKQPTMPVLFLTEAGTAPMYDIRASSLQNAVRFSKKWNLLGIVSNALALIKTPRLAQVVKSMGLVCVTYGTENNEPELAKIQMRAGVDAVIVDSVLAVREGLREHNETMNEFEDSPTE</sequence>